<keyword id="KW-1015">Disulfide bond</keyword>
<keyword id="KW-0256">Endoplasmic reticulum</keyword>
<keyword id="KW-0325">Glycoprotein</keyword>
<keyword id="KW-0337">GPI-anchor biosynthesis</keyword>
<keyword id="KW-0472">Membrane</keyword>
<keyword id="KW-1185">Reference proteome</keyword>
<keyword id="KW-0732">Signal</keyword>
<keyword id="KW-0812">Transmembrane</keyword>
<keyword id="KW-1133">Transmembrane helix</keyword>
<protein>
    <recommendedName>
        <fullName evidence="4">GPI-anchor transamidase component PIGT</fullName>
    </recommendedName>
    <alternativeName>
        <fullName>Neuronal development-associated protein 7</fullName>
    </alternativeName>
    <alternativeName>
        <fullName>Phosphatidylinositol-glycan biosynthesis class T protein</fullName>
    </alternativeName>
</protein>
<sequence>MAAAMPLGLPLRLLVLLLVGRGCCGCAEGPRDSLREELVITPLPSGDVAATFQFRTRWDSDLQREGVSHYRLFPKALGQLISKYSLRELHLSFTQGFWRTRYWGPPFLQAPSGAELWVWFQDTVTDVDKSWRELSNVLSGIFCASLNFIDATNTVTPTASFKPLGLANDTDDYFLRYAVLPREVVCTENLTPWKKLLPCSSKAGLSVLLKADRLFHTSYHSQAVHIRPICRNAHCTSISWELRQTLSVVFDAFITGQGKKDWSLFRMFSRTLTEACPLASQSLVYVDITGYSQDNETLEVSPPPTSTYQDVILGTRKTYAVYDLFDTAMINNSRNLNIQLKWKRPPDNEALPVPFLHAQRYVSGYGLQKGELSTLLYNSHPYRAFPVLLLDVVPWYLRLYVHTLTITSKGKENKPSYIHYQPAQDRQQPHLLEMLIQLPANSVTKVSIQFERALLKWTEYTPDPNHGFYVSPSVLSALVPSVVAAKPVDWEGSPLFNTLFPVSDGSSYFVRLYTEPLLVNLPTPDFSMPYNVICLTCTVVAVCYGSFYNLLTRTFHIEEPKSGGLAKRLANLIRRARGVPPL</sequence>
<comment type="function">
    <text evidence="1">Component of the glycosylphosphatidylinositol-anchor (GPI-anchor) transamidase (GPI-T) complex that catalyzes the formation of the linkage between a proprotein and a GPI-anchor and participates in GPI anchored protein biosynthesis. May play a crucial role in GPI-T complex assembly in the luminal layer (By similarity). Binds GPI-anchor (By similarity).</text>
</comment>
<comment type="pathway">
    <text evidence="1">Glycolipid biosynthesis; glycosylphosphatidylinositol-anchor biosynthesis.</text>
</comment>
<comment type="subunit">
    <text evidence="1">Heteropentamer. Part of the GPI-anchor transamidase complex, consisting of PIGK, PIGT, PIGS, PIGU and GAA1.</text>
</comment>
<comment type="subcellular location">
    <subcellularLocation>
        <location evidence="1">Endoplasmic reticulum membrane</location>
        <topology evidence="1">Single-pass type I membrane protein</topology>
    </subcellularLocation>
</comment>
<comment type="PTM">
    <text evidence="1">The disulfide bond between PIGK/GPI8 and PIGT is important for normal enzyme activity.</text>
</comment>
<comment type="similarity">
    <text evidence="4">Belongs to the PIGT family.</text>
</comment>
<comment type="sequence caution" evidence="4">
    <conflict type="erroneous initiation">
        <sequence resource="EMBL-CDS" id="AAH34175"/>
    </conflict>
    <text>Truncated N-terminus.</text>
</comment>
<comment type="sequence caution" evidence="4">
    <conflict type="erroneous initiation">
        <sequence resource="EMBL-CDS" id="AAK32809"/>
    </conflict>
    <text>Truncated N-terminus.</text>
</comment>
<comment type="sequence caution" evidence="4">
    <conflict type="erroneous initiation">
        <sequence resource="EMBL-CDS" id="BAB39711"/>
    </conflict>
    <text>Truncated N-terminus.</text>
</comment>
<comment type="sequence caution" evidence="4">
    <conflict type="erroneous initiation">
        <sequence resource="EMBL-CDS" id="CAC34729"/>
    </conflict>
    <text>Truncated N-terminus.</text>
</comment>
<feature type="signal peptide" evidence="2">
    <location>
        <begin position="1"/>
        <end position="25"/>
    </location>
</feature>
<feature type="chain" id="PRO_0000024108" description="GPI-anchor transamidase component PIGT">
    <location>
        <begin position="26"/>
        <end position="582"/>
    </location>
</feature>
<feature type="topological domain" description="Lumenal" evidence="1">
    <location>
        <begin position="26"/>
        <end position="529"/>
    </location>
</feature>
<feature type="transmembrane region" description="Helical" evidence="1">
    <location>
        <begin position="530"/>
        <end position="552"/>
    </location>
</feature>
<feature type="topological domain" description="Cytoplasmic" evidence="1">
    <location>
        <begin position="553"/>
        <end position="582"/>
    </location>
</feature>
<feature type="binding site" evidence="1">
    <location>
        <position position="465"/>
    </location>
    <ligand>
        <name>a 2-acyl-6-[6-phosphoethanolamine-alpha-D-mannosyl-(1-&gt;2)-6-phosphoethanolamine-alpha-D-mannosyl-(1-&gt;6)-2-phosphoethanolamine-alpha-D-mannosyl-(1-&gt;4)-alpha-D-glucosaminyl]-1-(1-radyl,2-acyl-sn-glycero-3-phospho)-1D-myo-inositol</name>
        <dbReference type="ChEBI" id="CHEBI:144080"/>
    </ligand>
</feature>
<feature type="binding site" evidence="1">
    <location>
        <position position="525"/>
    </location>
    <ligand>
        <name>a 2-acyl-6-[6-phosphoethanolamine-alpha-D-mannosyl-(1-&gt;2)-6-phosphoethanolamine-alpha-D-mannosyl-(1-&gt;6)-2-phosphoethanolamine-alpha-D-mannosyl-(1-&gt;4)-alpha-D-glucosaminyl]-1-(1-radyl,2-acyl-sn-glycero-3-phospho)-1D-myo-inositol</name>
        <dbReference type="ChEBI" id="CHEBI:144080"/>
    </ligand>
</feature>
<feature type="binding site" evidence="1">
    <location>
        <position position="527"/>
    </location>
    <ligand>
        <name>a 2-acyl-6-[6-phosphoethanolamine-alpha-D-mannosyl-(1-&gt;2)-6-phosphoethanolamine-alpha-D-mannosyl-(1-&gt;6)-2-phosphoethanolamine-alpha-D-mannosyl-(1-&gt;4)-alpha-D-glucosaminyl]-1-(1-radyl,2-acyl-sn-glycero-3-phospho)-1D-myo-inositol</name>
        <dbReference type="ChEBI" id="CHEBI:144080"/>
    </ligand>
</feature>
<feature type="binding site" evidence="1">
    <location>
        <position position="531"/>
    </location>
    <ligand>
        <name>a 2-acyl-6-[6-phosphoethanolamine-alpha-D-mannosyl-(1-&gt;2)-6-phosphoethanolamine-alpha-D-mannosyl-(1-&gt;6)-2-phosphoethanolamine-alpha-D-mannosyl-(1-&gt;4)-alpha-D-glucosaminyl]-1-(1-radyl,2-acyl-sn-glycero-3-phospho)-1D-myo-inositol</name>
        <dbReference type="ChEBI" id="CHEBI:144080"/>
    </ligand>
</feature>
<feature type="glycosylation site" description="N-linked (GlcNAc...) asparagine" evidence="3">
    <location>
        <position position="168"/>
    </location>
</feature>
<feature type="glycosylation site" description="N-linked (GlcNAc...) asparagine" evidence="2">
    <location>
        <position position="295"/>
    </location>
</feature>
<feature type="glycosylation site" description="N-linked (GlcNAc...) asparagine" evidence="2">
    <location>
        <position position="331"/>
    </location>
</feature>
<feature type="disulfide bond" description="Interchain (with C-92 in PIGK/GPI8)" evidence="1">
    <location>
        <position position="186"/>
    </location>
</feature>
<feature type="disulfide bond" evidence="1">
    <location>
        <begin position="199"/>
        <end position="276"/>
    </location>
</feature>
<feature type="disulfide bond" evidence="1">
    <location>
        <begin position="230"/>
        <end position="235"/>
    </location>
</feature>
<feature type="sequence conflict" description="In Ref. 1; BAC31951." evidence="4" ref="1">
    <original>P</original>
    <variation>Q</variation>
    <location>
        <position position="346"/>
    </location>
</feature>
<proteinExistence type="evidence at protein level"/>
<evidence type="ECO:0000250" key="1">
    <source>
        <dbReference type="UniProtKB" id="Q969N2"/>
    </source>
</evidence>
<evidence type="ECO:0000255" key="2"/>
<evidence type="ECO:0000269" key="3">
    <source>
    </source>
</evidence>
<evidence type="ECO:0000305" key="4"/>
<evidence type="ECO:0000312" key="5">
    <source>
        <dbReference type="MGI" id="MGI:1926178"/>
    </source>
</evidence>
<dbReference type="EMBL" id="AK044499">
    <property type="protein sequence ID" value="BAC31951.1"/>
    <property type="molecule type" value="mRNA"/>
</dbReference>
<dbReference type="EMBL" id="AK155057">
    <property type="protein sequence ID" value="BAE33018.1"/>
    <property type="molecule type" value="mRNA"/>
</dbReference>
<dbReference type="EMBL" id="AL591478">
    <property type="status" value="NOT_ANNOTATED_CDS"/>
    <property type="molecule type" value="Genomic_DNA"/>
</dbReference>
<dbReference type="EMBL" id="AJ308886">
    <property type="protein sequence ID" value="CAC34729.1"/>
    <property type="status" value="ALT_INIT"/>
    <property type="molecule type" value="mRNA"/>
</dbReference>
<dbReference type="EMBL" id="AF361435">
    <property type="protein sequence ID" value="AAK32809.1"/>
    <property type="status" value="ALT_INIT"/>
    <property type="molecule type" value="mRNA"/>
</dbReference>
<dbReference type="EMBL" id="AB057593">
    <property type="protein sequence ID" value="BAB39711.1"/>
    <property type="status" value="ALT_INIT"/>
    <property type="molecule type" value="mRNA"/>
</dbReference>
<dbReference type="EMBL" id="BC034175">
    <property type="protein sequence ID" value="AAH34175.1"/>
    <property type="status" value="ALT_INIT"/>
    <property type="molecule type" value="mRNA"/>
</dbReference>
<dbReference type="CCDS" id="CCDS17038.2"/>
<dbReference type="RefSeq" id="NP_598540.2">
    <property type="nucleotide sequence ID" value="NM_133779.3"/>
</dbReference>
<dbReference type="RefSeq" id="XP_006500484.2">
    <property type="nucleotide sequence ID" value="XM_006500421.3"/>
</dbReference>
<dbReference type="SMR" id="Q8BXQ2"/>
<dbReference type="BioGRID" id="219713">
    <property type="interactions" value="5"/>
</dbReference>
<dbReference type="FunCoup" id="Q8BXQ2">
    <property type="interactions" value="2537"/>
</dbReference>
<dbReference type="STRING" id="10090.ENSMUSP00000099390"/>
<dbReference type="GlyConnect" id="2361">
    <property type="glycosylation" value="1 N-Linked glycan (1 site)"/>
</dbReference>
<dbReference type="GlyCosmos" id="Q8BXQ2">
    <property type="glycosylation" value="3 sites, 1 glycan"/>
</dbReference>
<dbReference type="GlyGen" id="Q8BXQ2">
    <property type="glycosylation" value="5 sites, 3 N-linked glycans (2 sites), 1 O-linked glycan (1 site)"/>
</dbReference>
<dbReference type="iPTMnet" id="Q8BXQ2"/>
<dbReference type="PhosphoSitePlus" id="Q8BXQ2"/>
<dbReference type="SwissPalm" id="Q8BXQ2"/>
<dbReference type="PaxDb" id="10090-ENSMUSP00000099390"/>
<dbReference type="ProteomicsDB" id="288158"/>
<dbReference type="Pumba" id="Q8BXQ2"/>
<dbReference type="Antibodypedia" id="27619">
    <property type="antibodies" value="150 antibodies from 24 providers"/>
</dbReference>
<dbReference type="DNASU" id="78928"/>
<dbReference type="Ensembl" id="ENSMUST00000103101.11">
    <property type="protein sequence ID" value="ENSMUSP00000099390.5"/>
    <property type="gene ID" value="ENSMUSG00000017721.16"/>
</dbReference>
<dbReference type="GeneID" id="78928"/>
<dbReference type="KEGG" id="mmu:78928"/>
<dbReference type="UCSC" id="uc008nvc.1">
    <property type="organism name" value="mouse"/>
</dbReference>
<dbReference type="AGR" id="MGI:1926178"/>
<dbReference type="CTD" id="51604"/>
<dbReference type="MGI" id="MGI:1926178">
    <property type="gene designation" value="Pigt"/>
</dbReference>
<dbReference type="VEuPathDB" id="HostDB:ENSMUSG00000017721"/>
<dbReference type="eggNOG" id="KOG2407">
    <property type="taxonomic scope" value="Eukaryota"/>
</dbReference>
<dbReference type="GeneTree" id="ENSGT00390000018558"/>
<dbReference type="HOGENOM" id="CLU_021459_2_0_1"/>
<dbReference type="InParanoid" id="Q8BXQ2"/>
<dbReference type="OMA" id="NHGHYIG"/>
<dbReference type="OrthoDB" id="331263at2759"/>
<dbReference type="PhylomeDB" id="Q8BXQ2"/>
<dbReference type="TreeFam" id="TF105921"/>
<dbReference type="Reactome" id="R-MMU-162791">
    <property type="pathway name" value="Attachment of GPI anchor to uPAR"/>
</dbReference>
<dbReference type="UniPathway" id="UPA00196"/>
<dbReference type="BioGRID-ORCS" id="78928">
    <property type="hits" value="11 hits in 78 CRISPR screens"/>
</dbReference>
<dbReference type="ChiTaRS" id="Pigt">
    <property type="organism name" value="mouse"/>
</dbReference>
<dbReference type="PRO" id="PR:Q8BXQ2"/>
<dbReference type="Proteomes" id="UP000000589">
    <property type="component" value="Chromosome 2"/>
</dbReference>
<dbReference type="RNAct" id="Q8BXQ2">
    <property type="molecule type" value="protein"/>
</dbReference>
<dbReference type="Bgee" id="ENSMUSG00000017721">
    <property type="expression patterns" value="Expressed in embryonic brain and 97 other cell types or tissues"/>
</dbReference>
<dbReference type="ExpressionAtlas" id="Q8BXQ2">
    <property type="expression patterns" value="baseline and differential"/>
</dbReference>
<dbReference type="GO" id="GO:0005737">
    <property type="term" value="C:cytoplasm"/>
    <property type="evidence" value="ECO:0000314"/>
    <property type="project" value="MGI"/>
</dbReference>
<dbReference type="GO" id="GO:0031410">
    <property type="term" value="C:cytoplasmic vesicle"/>
    <property type="evidence" value="ECO:0000314"/>
    <property type="project" value="MGI"/>
</dbReference>
<dbReference type="GO" id="GO:0042765">
    <property type="term" value="C:GPI-anchor transamidase complex"/>
    <property type="evidence" value="ECO:0000314"/>
    <property type="project" value="UniProtKB"/>
</dbReference>
<dbReference type="GO" id="GO:0034235">
    <property type="term" value="F:GPI anchor binding"/>
    <property type="evidence" value="ECO:0007669"/>
    <property type="project" value="Ensembl"/>
</dbReference>
<dbReference type="GO" id="GO:0016255">
    <property type="term" value="P:attachment of GPI anchor to protein"/>
    <property type="evidence" value="ECO:0000315"/>
    <property type="project" value="UniProtKB"/>
</dbReference>
<dbReference type="GO" id="GO:0006506">
    <property type="term" value="P:GPI anchor biosynthetic process"/>
    <property type="evidence" value="ECO:0007669"/>
    <property type="project" value="UniProtKB-UniPathway"/>
</dbReference>
<dbReference type="GO" id="GO:0180046">
    <property type="term" value="P:GPI anchored protein biosynthesis"/>
    <property type="evidence" value="ECO:0000250"/>
    <property type="project" value="UniProtKB"/>
</dbReference>
<dbReference type="GO" id="GO:0051402">
    <property type="term" value="P:neuron apoptotic process"/>
    <property type="evidence" value="ECO:0000314"/>
    <property type="project" value="MGI"/>
</dbReference>
<dbReference type="GO" id="GO:0030182">
    <property type="term" value="P:neuron differentiation"/>
    <property type="evidence" value="ECO:0000314"/>
    <property type="project" value="MGI"/>
</dbReference>
<dbReference type="InterPro" id="IPR007245">
    <property type="entry name" value="PIG-T"/>
</dbReference>
<dbReference type="PANTHER" id="PTHR12959:SF11">
    <property type="entry name" value="GPI TRANSAMIDASE COMPONENT PIG-T"/>
    <property type="match status" value="1"/>
</dbReference>
<dbReference type="PANTHER" id="PTHR12959">
    <property type="entry name" value="GPI TRANSAMIDASE COMPONENT PIG-T-RELATED"/>
    <property type="match status" value="1"/>
</dbReference>
<dbReference type="Pfam" id="PF04113">
    <property type="entry name" value="Gpi16"/>
    <property type="match status" value="2"/>
</dbReference>
<gene>
    <name evidence="5" type="primary">Pigt</name>
    <name type="synonym">Ndap7</name>
</gene>
<organism>
    <name type="scientific">Mus musculus</name>
    <name type="common">Mouse</name>
    <dbReference type="NCBI Taxonomy" id="10090"/>
    <lineage>
        <taxon>Eukaryota</taxon>
        <taxon>Metazoa</taxon>
        <taxon>Chordata</taxon>
        <taxon>Craniata</taxon>
        <taxon>Vertebrata</taxon>
        <taxon>Euteleostomi</taxon>
        <taxon>Mammalia</taxon>
        <taxon>Eutheria</taxon>
        <taxon>Euarchontoglires</taxon>
        <taxon>Glires</taxon>
        <taxon>Rodentia</taxon>
        <taxon>Myomorpha</taxon>
        <taxon>Muroidea</taxon>
        <taxon>Muridae</taxon>
        <taxon>Murinae</taxon>
        <taxon>Mus</taxon>
        <taxon>Mus</taxon>
    </lineage>
</organism>
<accession>Q8BXQ2</accession>
<accession>A2A5G2</accession>
<accession>Q3U2X2</accession>
<accession>Q99JA3</accession>
<reference key="1">
    <citation type="journal article" date="2005" name="Science">
        <title>The transcriptional landscape of the mammalian genome.</title>
        <authorList>
            <person name="Carninci P."/>
            <person name="Kasukawa T."/>
            <person name="Katayama S."/>
            <person name="Gough J."/>
            <person name="Frith M.C."/>
            <person name="Maeda N."/>
            <person name="Oyama R."/>
            <person name="Ravasi T."/>
            <person name="Lenhard B."/>
            <person name="Wells C."/>
            <person name="Kodzius R."/>
            <person name="Shimokawa K."/>
            <person name="Bajic V.B."/>
            <person name="Brenner S.E."/>
            <person name="Batalov S."/>
            <person name="Forrest A.R."/>
            <person name="Zavolan M."/>
            <person name="Davis M.J."/>
            <person name="Wilming L.G."/>
            <person name="Aidinis V."/>
            <person name="Allen J.E."/>
            <person name="Ambesi-Impiombato A."/>
            <person name="Apweiler R."/>
            <person name="Aturaliya R.N."/>
            <person name="Bailey T.L."/>
            <person name="Bansal M."/>
            <person name="Baxter L."/>
            <person name="Beisel K.W."/>
            <person name="Bersano T."/>
            <person name="Bono H."/>
            <person name="Chalk A.M."/>
            <person name="Chiu K.P."/>
            <person name="Choudhary V."/>
            <person name="Christoffels A."/>
            <person name="Clutterbuck D.R."/>
            <person name="Crowe M.L."/>
            <person name="Dalla E."/>
            <person name="Dalrymple B.P."/>
            <person name="de Bono B."/>
            <person name="Della Gatta G."/>
            <person name="di Bernardo D."/>
            <person name="Down T."/>
            <person name="Engstrom P."/>
            <person name="Fagiolini M."/>
            <person name="Faulkner G."/>
            <person name="Fletcher C.F."/>
            <person name="Fukushima T."/>
            <person name="Furuno M."/>
            <person name="Futaki S."/>
            <person name="Gariboldi M."/>
            <person name="Georgii-Hemming P."/>
            <person name="Gingeras T.R."/>
            <person name="Gojobori T."/>
            <person name="Green R.E."/>
            <person name="Gustincich S."/>
            <person name="Harbers M."/>
            <person name="Hayashi Y."/>
            <person name="Hensch T.K."/>
            <person name="Hirokawa N."/>
            <person name="Hill D."/>
            <person name="Huminiecki L."/>
            <person name="Iacono M."/>
            <person name="Ikeo K."/>
            <person name="Iwama A."/>
            <person name="Ishikawa T."/>
            <person name="Jakt M."/>
            <person name="Kanapin A."/>
            <person name="Katoh M."/>
            <person name="Kawasawa Y."/>
            <person name="Kelso J."/>
            <person name="Kitamura H."/>
            <person name="Kitano H."/>
            <person name="Kollias G."/>
            <person name="Krishnan S.P."/>
            <person name="Kruger A."/>
            <person name="Kummerfeld S.K."/>
            <person name="Kurochkin I.V."/>
            <person name="Lareau L.F."/>
            <person name="Lazarevic D."/>
            <person name="Lipovich L."/>
            <person name="Liu J."/>
            <person name="Liuni S."/>
            <person name="McWilliam S."/>
            <person name="Madan Babu M."/>
            <person name="Madera M."/>
            <person name="Marchionni L."/>
            <person name="Matsuda H."/>
            <person name="Matsuzawa S."/>
            <person name="Miki H."/>
            <person name="Mignone F."/>
            <person name="Miyake S."/>
            <person name="Morris K."/>
            <person name="Mottagui-Tabar S."/>
            <person name="Mulder N."/>
            <person name="Nakano N."/>
            <person name="Nakauchi H."/>
            <person name="Ng P."/>
            <person name="Nilsson R."/>
            <person name="Nishiguchi S."/>
            <person name="Nishikawa S."/>
            <person name="Nori F."/>
            <person name="Ohara O."/>
            <person name="Okazaki Y."/>
            <person name="Orlando V."/>
            <person name="Pang K.C."/>
            <person name="Pavan W.J."/>
            <person name="Pavesi G."/>
            <person name="Pesole G."/>
            <person name="Petrovsky N."/>
            <person name="Piazza S."/>
            <person name="Reed J."/>
            <person name="Reid J.F."/>
            <person name="Ring B.Z."/>
            <person name="Ringwald M."/>
            <person name="Rost B."/>
            <person name="Ruan Y."/>
            <person name="Salzberg S.L."/>
            <person name="Sandelin A."/>
            <person name="Schneider C."/>
            <person name="Schoenbach C."/>
            <person name="Sekiguchi K."/>
            <person name="Semple C.A."/>
            <person name="Seno S."/>
            <person name="Sessa L."/>
            <person name="Sheng Y."/>
            <person name="Shibata Y."/>
            <person name="Shimada H."/>
            <person name="Shimada K."/>
            <person name="Silva D."/>
            <person name="Sinclair B."/>
            <person name="Sperling S."/>
            <person name="Stupka E."/>
            <person name="Sugiura K."/>
            <person name="Sultana R."/>
            <person name="Takenaka Y."/>
            <person name="Taki K."/>
            <person name="Tammoja K."/>
            <person name="Tan S.L."/>
            <person name="Tang S."/>
            <person name="Taylor M.S."/>
            <person name="Tegner J."/>
            <person name="Teichmann S.A."/>
            <person name="Ueda H.R."/>
            <person name="van Nimwegen E."/>
            <person name="Verardo R."/>
            <person name="Wei C.L."/>
            <person name="Yagi K."/>
            <person name="Yamanishi H."/>
            <person name="Zabarovsky E."/>
            <person name="Zhu S."/>
            <person name="Zimmer A."/>
            <person name="Hide W."/>
            <person name="Bult C."/>
            <person name="Grimmond S.M."/>
            <person name="Teasdale R.D."/>
            <person name="Liu E.T."/>
            <person name="Brusic V."/>
            <person name="Quackenbush J."/>
            <person name="Wahlestedt C."/>
            <person name="Mattick J.S."/>
            <person name="Hume D.A."/>
            <person name="Kai C."/>
            <person name="Sasaki D."/>
            <person name="Tomaru Y."/>
            <person name="Fukuda S."/>
            <person name="Kanamori-Katayama M."/>
            <person name="Suzuki M."/>
            <person name="Aoki J."/>
            <person name="Arakawa T."/>
            <person name="Iida J."/>
            <person name="Imamura K."/>
            <person name="Itoh M."/>
            <person name="Kato T."/>
            <person name="Kawaji H."/>
            <person name="Kawagashira N."/>
            <person name="Kawashima T."/>
            <person name="Kojima M."/>
            <person name="Kondo S."/>
            <person name="Konno H."/>
            <person name="Nakano K."/>
            <person name="Ninomiya N."/>
            <person name="Nishio T."/>
            <person name="Okada M."/>
            <person name="Plessy C."/>
            <person name="Shibata K."/>
            <person name="Shiraki T."/>
            <person name="Suzuki S."/>
            <person name="Tagami M."/>
            <person name="Waki K."/>
            <person name="Watahiki A."/>
            <person name="Okamura-Oho Y."/>
            <person name="Suzuki H."/>
            <person name="Kawai J."/>
            <person name="Hayashizaki Y."/>
        </authorList>
    </citation>
    <scope>NUCLEOTIDE SEQUENCE [LARGE SCALE MRNA]</scope>
    <source>
        <strain>C57BL/6J</strain>
        <strain>NOD</strain>
        <tissue>Retina</tissue>
    </source>
</reference>
<reference key="2">
    <citation type="journal article" date="2009" name="PLoS Biol.">
        <title>Lineage-specific biology revealed by a finished genome assembly of the mouse.</title>
        <authorList>
            <person name="Church D.M."/>
            <person name="Goodstadt L."/>
            <person name="Hillier L.W."/>
            <person name="Zody M.C."/>
            <person name="Goldstein S."/>
            <person name="She X."/>
            <person name="Bult C.J."/>
            <person name="Agarwala R."/>
            <person name="Cherry J.L."/>
            <person name="DiCuccio M."/>
            <person name="Hlavina W."/>
            <person name="Kapustin Y."/>
            <person name="Meric P."/>
            <person name="Maglott D."/>
            <person name="Birtle Z."/>
            <person name="Marques A.C."/>
            <person name="Graves T."/>
            <person name="Zhou S."/>
            <person name="Teague B."/>
            <person name="Potamousis K."/>
            <person name="Churas C."/>
            <person name="Place M."/>
            <person name="Herschleb J."/>
            <person name="Runnheim R."/>
            <person name="Forrest D."/>
            <person name="Amos-Landgraf J."/>
            <person name="Schwartz D.C."/>
            <person name="Cheng Z."/>
            <person name="Lindblad-Toh K."/>
            <person name="Eichler E.E."/>
            <person name="Ponting C.P."/>
        </authorList>
    </citation>
    <scope>NUCLEOTIDE SEQUENCE [LARGE SCALE GENOMIC DNA]</scope>
    <source>
        <strain>C57BL/6J</strain>
    </source>
</reference>
<reference key="3">
    <citation type="journal article" date="2001" name="Neurochem. Res.">
        <title>Cloning and identification of differentially expressed transcripts in primary culture of GABAergic neurons.</title>
        <authorList>
            <person name="Li Z."/>
            <person name="Li Q."/>
            <person name="Sun C.X."/>
            <person name="Hertz L."/>
            <person name="Yu A.C.H."/>
        </authorList>
    </citation>
    <scope>NUCLEOTIDE SEQUENCE [MRNA] OF 3-582</scope>
    <source>
        <strain>ICR</strain>
        <tissue>Brain</tissue>
    </source>
</reference>
<reference key="4">
    <citation type="journal article" date="2004" name="Genome Res.">
        <title>The status, quality, and expansion of the NIH full-length cDNA project: the Mammalian Gene Collection (MGC).</title>
        <authorList>
            <consortium name="The MGC Project Team"/>
        </authorList>
    </citation>
    <scope>NUCLEOTIDE SEQUENCE [LARGE SCALE MRNA] OF 2-582</scope>
    <source>
        <tissue>Mammary tumor</tissue>
    </source>
</reference>
<reference key="5">
    <citation type="journal article" date="2009" name="Nat. Biotechnol.">
        <title>Mass-spectrometric identification and relative quantification of N-linked cell surface glycoproteins.</title>
        <authorList>
            <person name="Wollscheid B."/>
            <person name="Bausch-Fluck D."/>
            <person name="Henderson C."/>
            <person name="O'Brien R."/>
            <person name="Bibel M."/>
            <person name="Schiess R."/>
            <person name="Aebersold R."/>
            <person name="Watts J.D."/>
        </authorList>
    </citation>
    <scope>GLYCOSYLATION [LARGE SCALE ANALYSIS] AT ASN-168</scope>
</reference>
<reference key="6">
    <citation type="journal article" date="2010" name="Cell">
        <title>A tissue-specific atlas of mouse protein phosphorylation and expression.</title>
        <authorList>
            <person name="Huttlin E.L."/>
            <person name="Jedrychowski M.P."/>
            <person name="Elias J.E."/>
            <person name="Goswami T."/>
            <person name="Rad R."/>
            <person name="Beausoleil S.A."/>
            <person name="Villen J."/>
            <person name="Haas W."/>
            <person name="Sowa M.E."/>
            <person name="Gygi S.P."/>
        </authorList>
    </citation>
    <scope>IDENTIFICATION BY MASS SPECTROMETRY [LARGE SCALE ANALYSIS]</scope>
    <source>
        <tissue>Testis</tissue>
    </source>
</reference>
<name>PIGT_MOUSE</name>